<feature type="chain" id="PRO_0000130541" description="Large ribosomal subunit protein uL29">
    <location>
        <begin position="1"/>
        <end position="123"/>
    </location>
</feature>
<feature type="region of interest" description="Disordered" evidence="2">
    <location>
        <begin position="84"/>
        <end position="123"/>
    </location>
</feature>
<feature type="compositionally biased region" description="Basic residues" evidence="2">
    <location>
        <begin position="86"/>
        <end position="96"/>
    </location>
</feature>
<reference key="1">
    <citation type="submission" date="2003-07" db="EMBL/GenBank/DDBJ databases">
        <title>Identification of novel toxin genes from the venom gland of Ophiophagus hannah.</title>
        <authorList>
            <person name="Rajagopalan N.K."/>
            <person name="Pung Y.F."/>
            <person name="Kumar P.P."/>
            <person name="Kini R.M."/>
        </authorList>
    </citation>
    <scope>NUCLEOTIDE SEQUENCE [MRNA]</scope>
</reference>
<accession>Q69CJ9</accession>
<organism>
    <name type="scientific">Ophiophagus hannah</name>
    <name type="common">King cobra</name>
    <name type="synonym">Naja hannah</name>
    <dbReference type="NCBI Taxonomy" id="8665"/>
    <lineage>
        <taxon>Eukaryota</taxon>
        <taxon>Metazoa</taxon>
        <taxon>Chordata</taxon>
        <taxon>Craniata</taxon>
        <taxon>Vertebrata</taxon>
        <taxon>Euteleostomi</taxon>
        <taxon>Lepidosauria</taxon>
        <taxon>Squamata</taxon>
        <taxon>Bifurcata</taxon>
        <taxon>Unidentata</taxon>
        <taxon>Episquamata</taxon>
        <taxon>Toxicofera</taxon>
        <taxon>Serpentes</taxon>
        <taxon>Colubroidea</taxon>
        <taxon>Elapidae</taxon>
        <taxon>Elapinae</taxon>
        <taxon>Ophiophagus</taxon>
    </lineage>
</organism>
<sequence length="123" mass="14478">MAKIKARDLRGKKKEELLKQLDDLKVELSQLRVAKVTGGAASKLSKIRVVRKSIARVLTVINQTQKENLRKFYKGKKYKPLDLRPKKTRAMRRRLNKHEEGLKTKKQQRKERLYPPRKYAVKA</sequence>
<proteinExistence type="evidence at transcript level"/>
<gene>
    <name type="primary">RPL35</name>
</gene>
<comment type="function">
    <text evidence="1">Component of the large ribosomal subunit. The ribosome is a large ribonucleoprotein complex responsible for the synthesis of proteins in the cell.</text>
</comment>
<comment type="subunit">
    <text evidence="1">Component of the large ribosomal subunit.</text>
</comment>
<comment type="subcellular location">
    <subcellularLocation>
        <location evidence="1">Cytoplasm</location>
    </subcellularLocation>
</comment>
<comment type="similarity">
    <text evidence="3">Belongs to the universal ribosomal protein uL29 family.</text>
</comment>
<keyword id="KW-0963">Cytoplasm</keyword>
<keyword id="KW-0687">Ribonucleoprotein</keyword>
<keyword id="KW-0689">Ribosomal protein</keyword>
<evidence type="ECO:0000250" key="1">
    <source>
        <dbReference type="UniProtKB" id="P42766"/>
    </source>
</evidence>
<evidence type="ECO:0000256" key="2">
    <source>
        <dbReference type="SAM" id="MobiDB-lite"/>
    </source>
</evidence>
<evidence type="ECO:0000305" key="3"/>
<name>RL35_OPHHA</name>
<dbReference type="EMBL" id="AY354199">
    <property type="protein sequence ID" value="AAR10441.1"/>
    <property type="molecule type" value="mRNA"/>
</dbReference>
<dbReference type="SMR" id="Q69CJ9"/>
<dbReference type="OrthoDB" id="528635at2759"/>
<dbReference type="GO" id="GO:0022625">
    <property type="term" value="C:cytosolic large ribosomal subunit"/>
    <property type="evidence" value="ECO:0007669"/>
    <property type="project" value="InterPro"/>
</dbReference>
<dbReference type="GO" id="GO:0003729">
    <property type="term" value="F:mRNA binding"/>
    <property type="evidence" value="ECO:0007669"/>
    <property type="project" value="TreeGrafter"/>
</dbReference>
<dbReference type="GO" id="GO:0003735">
    <property type="term" value="F:structural constituent of ribosome"/>
    <property type="evidence" value="ECO:0007669"/>
    <property type="project" value="InterPro"/>
</dbReference>
<dbReference type="GO" id="GO:0000463">
    <property type="term" value="P:maturation of LSU-rRNA from tricistronic rRNA transcript (SSU-rRNA, 5.8S rRNA, LSU-rRNA)"/>
    <property type="evidence" value="ECO:0007669"/>
    <property type="project" value="InterPro"/>
</dbReference>
<dbReference type="GO" id="GO:0006412">
    <property type="term" value="P:translation"/>
    <property type="evidence" value="ECO:0007669"/>
    <property type="project" value="InterPro"/>
</dbReference>
<dbReference type="CDD" id="cd00427">
    <property type="entry name" value="Ribosomal_L29_HIP"/>
    <property type="match status" value="1"/>
</dbReference>
<dbReference type="FunFam" id="1.10.287.310:FF:000002">
    <property type="entry name" value="60S ribosomal protein L35"/>
    <property type="match status" value="1"/>
</dbReference>
<dbReference type="FunFam" id="6.10.250.3450:FF:000001">
    <property type="entry name" value="60S ribosomal protein L35"/>
    <property type="match status" value="1"/>
</dbReference>
<dbReference type="Gene3D" id="1.10.287.310">
    <property type="match status" value="1"/>
</dbReference>
<dbReference type="Gene3D" id="6.10.250.3450">
    <property type="match status" value="1"/>
</dbReference>
<dbReference type="HAMAP" id="MF_00374">
    <property type="entry name" value="Ribosomal_uL29"/>
    <property type="match status" value="1"/>
</dbReference>
<dbReference type="InterPro" id="IPR001854">
    <property type="entry name" value="Ribosomal_uL29"/>
</dbReference>
<dbReference type="InterPro" id="IPR018254">
    <property type="entry name" value="Ribosomal_uL29_CS"/>
</dbReference>
<dbReference type="InterPro" id="IPR045059">
    <property type="entry name" value="Ribosomal_uL29_euk"/>
</dbReference>
<dbReference type="InterPro" id="IPR036049">
    <property type="entry name" value="Ribosomal_uL29_sf"/>
</dbReference>
<dbReference type="NCBIfam" id="TIGR00012">
    <property type="entry name" value="L29"/>
    <property type="match status" value="1"/>
</dbReference>
<dbReference type="PANTHER" id="PTHR45722">
    <property type="entry name" value="60S RIBOSOMAL PROTEIN L35"/>
    <property type="match status" value="1"/>
</dbReference>
<dbReference type="PANTHER" id="PTHR45722:SF2">
    <property type="entry name" value="LARGE RIBOSOMAL SUBUNIT PROTEIN UL29-RELATED"/>
    <property type="match status" value="1"/>
</dbReference>
<dbReference type="Pfam" id="PF00831">
    <property type="entry name" value="Ribosomal_L29"/>
    <property type="match status" value="1"/>
</dbReference>
<dbReference type="SUPFAM" id="SSF46561">
    <property type="entry name" value="Ribosomal protein L29 (L29p)"/>
    <property type="match status" value="1"/>
</dbReference>
<dbReference type="PROSITE" id="PS00579">
    <property type="entry name" value="RIBOSOMAL_L29"/>
    <property type="match status" value="1"/>
</dbReference>
<protein>
    <recommendedName>
        <fullName evidence="3">Large ribosomal subunit protein uL29</fullName>
    </recommendedName>
    <alternativeName>
        <fullName>60S ribosomal protein L35</fullName>
    </alternativeName>
</protein>